<organism>
    <name type="scientific">Aspergillus fumigatus (strain ATCC MYA-4609 / CBS 101355 / FGSC A1100 / Af293)</name>
    <name type="common">Neosartorya fumigata</name>
    <dbReference type="NCBI Taxonomy" id="330879"/>
    <lineage>
        <taxon>Eukaryota</taxon>
        <taxon>Fungi</taxon>
        <taxon>Dikarya</taxon>
        <taxon>Ascomycota</taxon>
        <taxon>Pezizomycotina</taxon>
        <taxon>Eurotiomycetes</taxon>
        <taxon>Eurotiomycetidae</taxon>
        <taxon>Eurotiales</taxon>
        <taxon>Aspergillaceae</taxon>
        <taxon>Aspergillus</taxon>
        <taxon>Aspergillus subgen. Fumigati</taxon>
    </lineage>
</organism>
<evidence type="ECO:0000250" key="1"/>
<evidence type="ECO:0000250" key="2">
    <source>
        <dbReference type="UniProtKB" id="O22317"/>
    </source>
</evidence>
<evidence type="ECO:0000255" key="3"/>
<evidence type="ECO:0000256" key="4">
    <source>
        <dbReference type="SAM" id="MobiDB-lite"/>
    </source>
</evidence>
<evidence type="ECO:0000305" key="5"/>
<proteinExistence type="inferred from homology"/>
<protein>
    <recommendedName>
        <fullName>Probable beta-glucosidase btgE</fullName>
        <ecNumber>3.2.1.21</ecNumber>
    </recommendedName>
    <alternativeName>
        <fullName>Beta-D-glucoside glucohydrolase btgE</fullName>
    </alternativeName>
    <alternativeName>
        <fullName>Cellobiase btgE</fullName>
    </alternativeName>
    <alternativeName>
        <fullName>Gentiobiase btgE</fullName>
    </alternativeName>
</protein>
<accession>Q4WC60</accession>
<gene>
    <name type="primary">btgE</name>
    <name type="ORF">AFUA_8G05610</name>
</gene>
<dbReference type="EC" id="3.2.1.21"/>
<dbReference type="EMBL" id="AAHF01000013">
    <property type="protein sequence ID" value="EAL85324.1"/>
    <property type="status" value="ALT_SEQ"/>
    <property type="molecule type" value="Genomic_DNA"/>
</dbReference>
<dbReference type="RefSeq" id="XP_747362.1">
    <property type="nucleotide sequence ID" value="XM_742269.1"/>
</dbReference>
<dbReference type="SMR" id="Q4WC60"/>
<dbReference type="STRING" id="330879.Q4WC60"/>
<dbReference type="GeneID" id="3504706"/>
<dbReference type="KEGG" id="afm:AFUA_8G05610"/>
<dbReference type="eggNOG" id="ENOG502QS0R">
    <property type="taxonomic scope" value="Eukaryota"/>
</dbReference>
<dbReference type="HOGENOM" id="CLU_027285_2_1_1"/>
<dbReference type="InParanoid" id="Q4WC60"/>
<dbReference type="OrthoDB" id="4082933at2759"/>
<dbReference type="UniPathway" id="UPA00696"/>
<dbReference type="Proteomes" id="UP000002530">
    <property type="component" value="Chromosome 8"/>
</dbReference>
<dbReference type="GO" id="GO:0009986">
    <property type="term" value="C:cell surface"/>
    <property type="evidence" value="ECO:0000318"/>
    <property type="project" value="GO_Central"/>
</dbReference>
<dbReference type="GO" id="GO:0005576">
    <property type="term" value="C:extracellular region"/>
    <property type="evidence" value="ECO:0000318"/>
    <property type="project" value="GO_Central"/>
</dbReference>
<dbReference type="GO" id="GO:0009277">
    <property type="term" value="C:fungal-type cell wall"/>
    <property type="evidence" value="ECO:0000318"/>
    <property type="project" value="GO_Central"/>
</dbReference>
<dbReference type="GO" id="GO:0042973">
    <property type="term" value="F:glucan endo-1,3-beta-D-glucosidase activity"/>
    <property type="evidence" value="ECO:0000318"/>
    <property type="project" value="GO_Central"/>
</dbReference>
<dbReference type="GO" id="GO:0071555">
    <property type="term" value="P:cell wall organization"/>
    <property type="evidence" value="ECO:0000318"/>
    <property type="project" value="GO_Central"/>
</dbReference>
<dbReference type="GO" id="GO:0030245">
    <property type="term" value="P:cellulose catabolic process"/>
    <property type="evidence" value="ECO:0007669"/>
    <property type="project" value="UniProtKB-UniPathway"/>
</dbReference>
<dbReference type="FunFam" id="3.20.20.80:FF:000165">
    <property type="entry name" value="Cell wall glucanase (Scw11)"/>
    <property type="match status" value="1"/>
</dbReference>
<dbReference type="FunFam" id="3.20.20.80:FF:000160">
    <property type="entry name" value="Probable beta-glucosidase btgE"/>
    <property type="match status" value="1"/>
</dbReference>
<dbReference type="Gene3D" id="3.20.20.80">
    <property type="entry name" value="Glycosidases"/>
    <property type="match status" value="2"/>
</dbReference>
<dbReference type="InterPro" id="IPR050732">
    <property type="entry name" value="Beta-glucan_modifiers"/>
</dbReference>
<dbReference type="InterPro" id="IPR017853">
    <property type="entry name" value="Glycoside_hydrolase_SF"/>
</dbReference>
<dbReference type="PANTHER" id="PTHR16631:SF24">
    <property type="entry name" value="FAMILY 17 GLUCOSIDASE SCW11-RELATED"/>
    <property type="match status" value="1"/>
</dbReference>
<dbReference type="PANTHER" id="PTHR16631">
    <property type="entry name" value="GLUCAN 1,3-BETA-GLUCOSIDASE"/>
    <property type="match status" value="1"/>
</dbReference>
<dbReference type="SUPFAM" id="SSF51445">
    <property type="entry name" value="(Trans)glycosidases"/>
    <property type="match status" value="1"/>
</dbReference>
<sequence length="565" mass="58148">MRGAILATAAALAGTAMADVAHMRRHGHDSFHQRRSPLAEADATCGCTTEVVTVWGPPTLIPVASPTPSTVTSEAVTTLHSTSTTTVTVIASASTPAASPSPATDKVPLPTPAITNFPSTGVYTIPATTVTVFDTTTVCGATTTELPAGTHTYGGVTTVVETATTVVCPYATVEPSGTTVTSVIKTTTYVCPSAGTYTIAPTTTTVPTSTVIVYPTPAVITPGTYTQPEQTVTVTRTDYTYVCPFTGQDEPTSAPAAPSTTAVPATTTAAPETTTAAPDTTTAVPSTSSAAPSSSSTAPASTGAVSGQMGMTYTPYTKGGDCKDKSSVLSEVAALKSKGFTHVRVYSTDCNSLEYIGEAARTSGLQMIIGVFISSTGVSGAQDQVTAISKWAQWDLVSLIVVGNEAIQNGYCDASTLAGFISSAKSAFQAAGYTGKVTTTEPINVWQAHGSTLCGVCDIVGANIHPFFNADVSADQAGKFVAQEIKVLESICPGKDVLNLETGWPHAGNANGKAVPGTSEQAIAIKSIADEVGSKSVFFSYFDDLWKEPGQFGVERYWGCFDTFN</sequence>
<name>BTGE_ASPFU</name>
<comment type="function">
    <text evidence="1">Beta-glucosidases are one of a number of cellulolytic enzymes involved in the degradation of cellulosic biomass. Catalyzes the last step releasing glucose from the inhibitory cellobiose (By similarity).</text>
</comment>
<comment type="catalytic activity">
    <reaction>
        <text>Hydrolysis of terminal, non-reducing beta-D-glucosyl residues with release of beta-D-glucose.</text>
        <dbReference type="EC" id="3.2.1.21"/>
    </reaction>
</comment>
<comment type="pathway">
    <text>Glycan metabolism; cellulose degradation.</text>
</comment>
<comment type="subcellular location">
    <subcellularLocation>
        <location evidence="1">Secreted</location>
        <location evidence="1">Cell wall</location>
    </subcellularLocation>
    <text evidence="1">Covalently-linked to the cell wall.</text>
</comment>
<comment type="similarity">
    <text evidence="5">Belongs to the glycosyl hydrolase 17 family.</text>
</comment>
<comment type="sequence caution" evidence="5">
    <conflict type="erroneous gene model prediction">
        <sequence resource="EMBL-CDS" id="EAL85324"/>
    </conflict>
</comment>
<feature type="signal peptide" evidence="3">
    <location>
        <begin position="1"/>
        <end position="18"/>
    </location>
</feature>
<feature type="chain" id="PRO_0000395133" description="Probable beta-glucosidase btgE">
    <location>
        <begin position="19"/>
        <end position="565"/>
    </location>
</feature>
<feature type="region of interest" description="Disordered" evidence="4">
    <location>
        <begin position="246"/>
        <end position="304"/>
    </location>
</feature>
<feature type="compositionally biased region" description="Low complexity" evidence="4">
    <location>
        <begin position="251"/>
        <end position="304"/>
    </location>
</feature>
<feature type="active site" description="Proton donor" evidence="2">
    <location>
        <position position="405"/>
    </location>
</feature>
<feature type="active site" description="Nucleophile" evidence="2">
    <location>
        <position position="501"/>
    </location>
</feature>
<keyword id="KW-0119">Carbohydrate metabolism</keyword>
<keyword id="KW-0134">Cell wall</keyword>
<keyword id="KW-0136">Cellulose degradation</keyword>
<keyword id="KW-0326">Glycosidase</keyword>
<keyword id="KW-0378">Hydrolase</keyword>
<keyword id="KW-0624">Polysaccharide degradation</keyword>
<keyword id="KW-1185">Reference proteome</keyword>
<keyword id="KW-0964">Secreted</keyword>
<keyword id="KW-0732">Signal</keyword>
<reference key="1">
    <citation type="journal article" date="2005" name="Nature">
        <title>Genomic sequence of the pathogenic and allergenic filamentous fungus Aspergillus fumigatus.</title>
        <authorList>
            <person name="Nierman W.C."/>
            <person name="Pain A."/>
            <person name="Anderson M.J."/>
            <person name="Wortman J.R."/>
            <person name="Kim H.S."/>
            <person name="Arroyo J."/>
            <person name="Berriman M."/>
            <person name="Abe K."/>
            <person name="Archer D.B."/>
            <person name="Bermejo C."/>
            <person name="Bennett J.W."/>
            <person name="Bowyer P."/>
            <person name="Chen D."/>
            <person name="Collins M."/>
            <person name="Coulsen R."/>
            <person name="Davies R."/>
            <person name="Dyer P.S."/>
            <person name="Farman M.L."/>
            <person name="Fedorova N."/>
            <person name="Fedorova N.D."/>
            <person name="Feldblyum T.V."/>
            <person name="Fischer R."/>
            <person name="Fosker N."/>
            <person name="Fraser A."/>
            <person name="Garcia J.L."/>
            <person name="Garcia M.J."/>
            <person name="Goble A."/>
            <person name="Goldman G.H."/>
            <person name="Gomi K."/>
            <person name="Griffith-Jones S."/>
            <person name="Gwilliam R."/>
            <person name="Haas B.J."/>
            <person name="Haas H."/>
            <person name="Harris D.E."/>
            <person name="Horiuchi H."/>
            <person name="Huang J."/>
            <person name="Humphray S."/>
            <person name="Jimenez J."/>
            <person name="Keller N."/>
            <person name="Khouri H."/>
            <person name="Kitamoto K."/>
            <person name="Kobayashi T."/>
            <person name="Konzack S."/>
            <person name="Kulkarni R."/>
            <person name="Kumagai T."/>
            <person name="Lafton A."/>
            <person name="Latge J.-P."/>
            <person name="Li W."/>
            <person name="Lord A."/>
            <person name="Lu C."/>
            <person name="Majoros W.H."/>
            <person name="May G.S."/>
            <person name="Miller B.L."/>
            <person name="Mohamoud Y."/>
            <person name="Molina M."/>
            <person name="Monod M."/>
            <person name="Mouyna I."/>
            <person name="Mulligan S."/>
            <person name="Murphy L.D."/>
            <person name="O'Neil S."/>
            <person name="Paulsen I."/>
            <person name="Penalva M.A."/>
            <person name="Pertea M."/>
            <person name="Price C."/>
            <person name="Pritchard B.L."/>
            <person name="Quail M.A."/>
            <person name="Rabbinowitsch E."/>
            <person name="Rawlins N."/>
            <person name="Rajandream M.A."/>
            <person name="Reichard U."/>
            <person name="Renauld H."/>
            <person name="Robson G.D."/>
            <person name="Rodriguez de Cordoba S."/>
            <person name="Rodriguez-Pena J.M."/>
            <person name="Ronning C.M."/>
            <person name="Rutter S."/>
            <person name="Salzberg S.L."/>
            <person name="Sanchez M."/>
            <person name="Sanchez-Ferrero J.C."/>
            <person name="Saunders D."/>
            <person name="Seeger K."/>
            <person name="Squares R."/>
            <person name="Squares S."/>
            <person name="Takeuchi M."/>
            <person name="Tekaia F."/>
            <person name="Turner G."/>
            <person name="Vazquez de Aldana C.R."/>
            <person name="Weidman J."/>
            <person name="White O."/>
            <person name="Woodward J.R."/>
            <person name="Yu J.-H."/>
            <person name="Fraser C.M."/>
            <person name="Galagan J.E."/>
            <person name="Asai K."/>
            <person name="Machida M."/>
            <person name="Hall N."/>
            <person name="Barrell B.G."/>
            <person name="Denning D.W."/>
        </authorList>
    </citation>
    <scope>NUCLEOTIDE SEQUENCE [LARGE SCALE GENOMIC DNA]</scope>
    <source>
        <strain>ATCC MYA-4609 / CBS 101355 / FGSC A1100 / Af293</strain>
    </source>
</reference>